<feature type="chain" id="PRO_0000077471" description="Protein YrdA">
    <location>
        <begin position="1"/>
        <end position="184"/>
    </location>
</feature>
<reference key="1">
    <citation type="journal article" date="2002" name="Nucleic Acids Res.">
        <title>Genome sequence of Shigella flexneri 2a: insights into pathogenicity through comparison with genomes of Escherichia coli K12 and O157.</title>
        <authorList>
            <person name="Jin Q."/>
            <person name="Yuan Z."/>
            <person name="Xu J."/>
            <person name="Wang Y."/>
            <person name="Shen Y."/>
            <person name="Lu W."/>
            <person name="Wang J."/>
            <person name="Liu H."/>
            <person name="Yang J."/>
            <person name="Yang F."/>
            <person name="Zhang X."/>
            <person name="Zhang J."/>
            <person name="Yang G."/>
            <person name="Wu H."/>
            <person name="Qu D."/>
            <person name="Dong J."/>
            <person name="Sun L."/>
            <person name="Xue Y."/>
            <person name="Zhao A."/>
            <person name="Gao Y."/>
            <person name="Zhu J."/>
            <person name="Kan B."/>
            <person name="Ding K."/>
            <person name="Chen S."/>
            <person name="Cheng H."/>
            <person name="Yao Z."/>
            <person name="He B."/>
            <person name="Chen R."/>
            <person name="Ma D."/>
            <person name="Qiang B."/>
            <person name="Wen Y."/>
            <person name="Hou Y."/>
            <person name="Yu J."/>
        </authorList>
    </citation>
    <scope>NUCLEOTIDE SEQUENCE [LARGE SCALE GENOMIC DNA]</scope>
    <source>
        <strain>301 / Serotype 2a</strain>
    </source>
</reference>
<reference key="2">
    <citation type="journal article" date="2003" name="Infect. Immun.">
        <title>Complete genome sequence and comparative genomics of Shigella flexneri serotype 2a strain 2457T.</title>
        <authorList>
            <person name="Wei J."/>
            <person name="Goldberg M.B."/>
            <person name="Burland V."/>
            <person name="Venkatesan M.M."/>
            <person name="Deng W."/>
            <person name="Fournier G."/>
            <person name="Mayhew G.F."/>
            <person name="Plunkett G. III"/>
            <person name="Rose D.J."/>
            <person name="Darling A."/>
            <person name="Mau B."/>
            <person name="Perna N.T."/>
            <person name="Payne S.M."/>
            <person name="Runyen-Janecky L.J."/>
            <person name="Zhou S."/>
            <person name="Schwartz D.C."/>
            <person name="Blattner F.R."/>
        </authorList>
    </citation>
    <scope>NUCLEOTIDE SEQUENCE [LARGE SCALE GENOMIC DNA]</scope>
    <source>
        <strain>ATCC 700930 / 2457T / Serotype 2a</strain>
    </source>
</reference>
<proteinExistence type="inferred from homology"/>
<name>YRDA_SHIFL</name>
<organism>
    <name type="scientific">Shigella flexneri</name>
    <dbReference type="NCBI Taxonomy" id="623"/>
    <lineage>
        <taxon>Bacteria</taxon>
        <taxon>Pseudomonadati</taxon>
        <taxon>Pseudomonadota</taxon>
        <taxon>Gammaproteobacteria</taxon>
        <taxon>Enterobacterales</taxon>
        <taxon>Enterobacteriaceae</taxon>
        <taxon>Shigella</taxon>
    </lineage>
</organism>
<comment type="similarity">
    <text evidence="1">Belongs to the gamma-class carbonic anhydrase family.</text>
</comment>
<comment type="sequence caution" evidence="1">
    <conflict type="erroneous initiation">
        <sequence resource="EMBL-CDS" id="AAN44774"/>
    </conflict>
    <text>Extended N-terminus.</text>
</comment>
<comment type="sequence caution" evidence="1">
    <conflict type="erroneous initiation">
        <sequence resource="EMBL-CDS" id="AAP18583"/>
    </conflict>
    <text>Extended N-terminus.</text>
</comment>
<evidence type="ECO:0000305" key="1"/>
<gene>
    <name type="primary">yrdA</name>
    <name type="ordered locus">SF3311</name>
    <name type="ordered locus">S3535</name>
</gene>
<keyword id="KW-1185">Reference proteome</keyword>
<protein>
    <recommendedName>
        <fullName>Protein YrdA</fullName>
    </recommendedName>
</protein>
<sequence>MSDVLRPYRDLFPQIGQRVMIDDSSVVIGDVRLADDVGIWPLVVIRGDVHYVQIGARTNIQDGSMLHVTHKSSYNPDGNPLTIGEDVTVGHKVMLHGCTIGNRVLVGMGSILLDGAIVEDDVMIGAGSLVPQNKRLESGYLYLGSPVKQIRPLSDEEKAGLRYSANNYVKWKDEYLDQGNQTQP</sequence>
<accession>P0A9X0</accession>
<accession>P45770</accession>
<dbReference type="EMBL" id="AE005674">
    <property type="protein sequence ID" value="AAN44774.2"/>
    <property type="status" value="ALT_INIT"/>
    <property type="molecule type" value="Genomic_DNA"/>
</dbReference>
<dbReference type="EMBL" id="AE014073">
    <property type="protein sequence ID" value="AAP18583.1"/>
    <property type="status" value="ALT_INIT"/>
    <property type="molecule type" value="Genomic_DNA"/>
</dbReference>
<dbReference type="RefSeq" id="NP_709067.2">
    <property type="nucleotide sequence ID" value="NC_004337.2"/>
</dbReference>
<dbReference type="RefSeq" id="WP_001286216.1">
    <property type="nucleotide sequence ID" value="NZ_WPGW01000137.1"/>
</dbReference>
<dbReference type="SMR" id="P0A9X0"/>
<dbReference type="STRING" id="198214.SF3311"/>
<dbReference type="PaxDb" id="198214-SF3311"/>
<dbReference type="GeneID" id="1026862"/>
<dbReference type="KEGG" id="sfl:SF3311"/>
<dbReference type="KEGG" id="sfx:S3535"/>
<dbReference type="PATRIC" id="fig|198214.7.peg.3920"/>
<dbReference type="HOGENOM" id="CLU_064827_1_0_6"/>
<dbReference type="Proteomes" id="UP000001006">
    <property type="component" value="Chromosome"/>
</dbReference>
<dbReference type="Proteomes" id="UP000002673">
    <property type="component" value="Chromosome"/>
</dbReference>
<dbReference type="CDD" id="cd04645">
    <property type="entry name" value="LbH_gamma_CA_like"/>
    <property type="match status" value="1"/>
</dbReference>
<dbReference type="FunFam" id="2.160.10.10:FF:000019">
    <property type="entry name" value="YRDA protein yrdA"/>
    <property type="match status" value="1"/>
</dbReference>
<dbReference type="Gene3D" id="2.160.10.10">
    <property type="entry name" value="Hexapeptide repeat proteins"/>
    <property type="match status" value="1"/>
</dbReference>
<dbReference type="InterPro" id="IPR001451">
    <property type="entry name" value="Hexapep"/>
</dbReference>
<dbReference type="InterPro" id="IPR047324">
    <property type="entry name" value="LbH_gamma_CA-like"/>
</dbReference>
<dbReference type="InterPro" id="IPR050484">
    <property type="entry name" value="Transf_Hexapept/Carb_Anhydrase"/>
</dbReference>
<dbReference type="InterPro" id="IPR011004">
    <property type="entry name" value="Trimer_LpxA-like_sf"/>
</dbReference>
<dbReference type="PANTHER" id="PTHR13061">
    <property type="entry name" value="DYNACTIN SUBUNIT P25"/>
    <property type="match status" value="1"/>
</dbReference>
<dbReference type="PANTHER" id="PTHR13061:SF56">
    <property type="entry name" value="PROTEIN YRDA"/>
    <property type="match status" value="1"/>
</dbReference>
<dbReference type="Pfam" id="PF00132">
    <property type="entry name" value="Hexapep"/>
    <property type="match status" value="1"/>
</dbReference>
<dbReference type="SUPFAM" id="SSF51161">
    <property type="entry name" value="Trimeric LpxA-like enzymes"/>
    <property type="match status" value="1"/>
</dbReference>